<reference key="1">
    <citation type="submission" date="2005-09" db="EMBL/GenBank/DDBJ databases">
        <title>Complete sequence of chromosome 1 of Rhodobacter sphaeroides 2.4.1.</title>
        <authorList>
            <person name="Copeland A."/>
            <person name="Lucas S."/>
            <person name="Lapidus A."/>
            <person name="Barry K."/>
            <person name="Detter J.C."/>
            <person name="Glavina T."/>
            <person name="Hammon N."/>
            <person name="Israni S."/>
            <person name="Pitluck S."/>
            <person name="Richardson P."/>
            <person name="Mackenzie C."/>
            <person name="Choudhary M."/>
            <person name="Larimer F."/>
            <person name="Hauser L.J."/>
            <person name="Land M."/>
            <person name="Donohue T.J."/>
            <person name="Kaplan S."/>
        </authorList>
    </citation>
    <scope>NUCLEOTIDE SEQUENCE [LARGE SCALE GENOMIC DNA]</scope>
    <source>
        <strain>ATCC 17023 / DSM 158 / JCM 6121 / CCUG 31486 / LMG 2827 / NBRC 12203 / NCIMB 8253 / ATH 2.4.1.</strain>
    </source>
</reference>
<sequence>MSFTLAIVGRPNVGKSTLFNRLVGKRLALVDDQPGVTRDLREGDARLIDLRFTVIDTAGLEEVTDDSLQGRMRRLTERAVEMADVCLFLIDGRVGVTPSDEVFADILRRKNAHVILGVNKAEGRAGDGGAIEAWSLGLGEPIRLSAEHGEGMDDLYHILRPIAEGFAERAAADAPVVDVDVPEEEADLEADPEAHKPTVKHPLQIAVIGRPNAGKSTLINKIIGEDRLLTGPEAGITRDAISVRSEWHGTPIRIFDTAGMRKKARISDKLEKLSVADGLRAVRFAEVVVVLLDVEIPFEQQDLRIADFAETEGRAVVVAVNKWDLEGEKQEKLAELKEMFERLLPQLRGAPLVTVSAKTGRGLDRLHAAILRAHDIWNRRITTARLNTWLGAMVEAHPPPAPGGRRIKLRYMTQVKTRPPGFVVMCSHPDEMPDSYRRYLVNGLRDHFDMPGTPIRLTMRGQGDKNPFKERKFRTPSRLRKHLGKKD</sequence>
<feature type="chain" id="PRO_1000011721" description="GTPase Der">
    <location>
        <begin position="1"/>
        <end position="487"/>
    </location>
</feature>
<feature type="domain" description="EngA-type G 1">
    <location>
        <begin position="3"/>
        <end position="167"/>
    </location>
</feature>
<feature type="domain" description="EngA-type G 2">
    <location>
        <begin position="203"/>
        <end position="378"/>
    </location>
</feature>
<feature type="domain" description="KH-like" evidence="1">
    <location>
        <begin position="379"/>
        <end position="463"/>
    </location>
</feature>
<feature type="region of interest" description="Disordered" evidence="2">
    <location>
        <begin position="451"/>
        <end position="487"/>
    </location>
</feature>
<feature type="compositionally biased region" description="Basic residues" evidence="2">
    <location>
        <begin position="471"/>
        <end position="487"/>
    </location>
</feature>
<feature type="binding site" evidence="1">
    <location>
        <begin position="9"/>
        <end position="16"/>
    </location>
    <ligand>
        <name>GTP</name>
        <dbReference type="ChEBI" id="CHEBI:37565"/>
        <label>1</label>
    </ligand>
</feature>
<feature type="binding site" evidence="1">
    <location>
        <begin position="56"/>
        <end position="60"/>
    </location>
    <ligand>
        <name>GTP</name>
        <dbReference type="ChEBI" id="CHEBI:37565"/>
        <label>1</label>
    </ligand>
</feature>
<feature type="binding site" evidence="1">
    <location>
        <begin position="119"/>
        <end position="122"/>
    </location>
    <ligand>
        <name>GTP</name>
        <dbReference type="ChEBI" id="CHEBI:37565"/>
        <label>1</label>
    </ligand>
</feature>
<feature type="binding site" evidence="1">
    <location>
        <begin position="209"/>
        <end position="216"/>
    </location>
    <ligand>
        <name>GTP</name>
        <dbReference type="ChEBI" id="CHEBI:37565"/>
        <label>2</label>
    </ligand>
</feature>
<feature type="binding site" evidence="1">
    <location>
        <begin position="256"/>
        <end position="260"/>
    </location>
    <ligand>
        <name>GTP</name>
        <dbReference type="ChEBI" id="CHEBI:37565"/>
        <label>2</label>
    </ligand>
</feature>
<feature type="binding site" evidence="1">
    <location>
        <begin position="321"/>
        <end position="324"/>
    </location>
    <ligand>
        <name>GTP</name>
        <dbReference type="ChEBI" id="CHEBI:37565"/>
        <label>2</label>
    </ligand>
</feature>
<keyword id="KW-0342">GTP-binding</keyword>
<keyword id="KW-0547">Nucleotide-binding</keyword>
<keyword id="KW-1185">Reference proteome</keyword>
<keyword id="KW-0677">Repeat</keyword>
<keyword id="KW-0690">Ribosome biogenesis</keyword>
<proteinExistence type="inferred from homology"/>
<accession>Q3J2Y1</accession>
<evidence type="ECO:0000255" key="1">
    <source>
        <dbReference type="HAMAP-Rule" id="MF_00195"/>
    </source>
</evidence>
<evidence type="ECO:0000256" key="2">
    <source>
        <dbReference type="SAM" id="MobiDB-lite"/>
    </source>
</evidence>
<name>DER_CERS4</name>
<protein>
    <recommendedName>
        <fullName evidence="1">GTPase Der</fullName>
    </recommendedName>
    <alternativeName>
        <fullName evidence="1">GTP-binding protein EngA</fullName>
    </alternativeName>
</protein>
<dbReference type="EMBL" id="CP000143">
    <property type="protein sequence ID" value="ABA78853.1"/>
    <property type="molecule type" value="Genomic_DNA"/>
</dbReference>
<dbReference type="RefSeq" id="WP_002719849.1">
    <property type="nucleotide sequence ID" value="NZ_CP030271.1"/>
</dbReference>
<dbReference type="RefSeq" id="YP_352754.1">
    <property type="nucleotide sequence ID" value="NC_007493.2"/>
</dbReference>
<dbReference type="SMR" id="Q3J2Y1"/>
<dbReference type="STRING" id="272943.RSP_2699"/>
<dbReference type="EnsemblBacteria" id="ABA78853">
    <property type="protein sequence ID" value="ABA78853"/>
    <property type="gene ID" value="RSP_2699"/>
</dbReference>
<dbReference type="GeneID" id="67446448"/>
<dbReference type="KEGG" id="rsp:RSP_2699"/>
<dbReference type="PATRIC" id="fig|272943.9.peg.1624"/>
<dbReference type="eggNOG" id="COG1160">
    <property type="taxonomic scope" value="Bacteria"/>
</dbReference>
<dbReference type="OrthoDB" id="9805918at2"/>
<dbReference type="PhylomeDB" id="Q3J2Y1"/>
<dbReference type="Proteomes" id="UP000002703">
    <property type="component" value="Chromosome 1"/>
</dbReference>
<dbReference type="GO" id="GO:0005525">
    <property type="term" value="F:GTP binding"/>
    <property type="evidence" value="ECO:0007669"/>
    <property type="project" value="UniProtKB-UniRule"/>
</dbReference>
<dbReference type="GO" id="GO:0042254">
    <property type="term" value="P:ribosome biogenesis"/>
    <property type="evidence" value="ECO:0007669"/>
    <property type="project" value="UniProtKB-KW"/>
</dbReference>
<dbReference type="CDD" id="cd01894">
    <property type="entry name" value="EngA1"/>
    <property type="match status" value="1"/>
</dbReference>
<dbReference type="CDD" id="cd01895">
    <property type="entry name" value="EngA2"/>
    <property type="match status" value="1"/>
</dbReference>
<dbReference type="FunFam" id="3.30.300.20:FF:000004">
    <property type="entry name" value="GTPase Der"/>
    <property type="match status" value="1"/>
</dbReference>
<dbReference type="Gene3D" id="3.30.300.20">
    <property type="match status" value="1"/>
</dbReference>
<dbReference type="Gene3D" id="3.40.50.300">
    <property type="entry name" value="P-loop containing nucleotide triphosphate hydrolases"/>
    <property type="match status" value="2"/>
</dbReference>
<dbReference type="HAMAP" id="MF_00195">
    <property type="entry name" value="GTPase_Der"/>
    <property type="match status" value="1"/>
</dbReference>
<dbReference type="InterPro" id="IPR031166">
    <property type="entry name" value="G_ENGA"/>
</dbReference>
<dbReference type="InterPro" id="IPR006073">
    <property type="entry name" value="GTP-bd"/>
</dbReference>
<dbReference type="InterPro" id="IPR016484">
    <property type="entry name" value="GTPase_Der"/>
</dbReference>
<dbReference type="InterPro" id="IPR032859">
    <property type="entry name" value="KH_dom-like"/>
</dbReference>
<dbReference type="InterPro" id="IPR015946">
    <property type="entry name" value="KH_dom-like_a/b"/>
</dbReference>
<dbReference type="InterPro" id="IPR027417">
    <property type="entry name" value="P-loop_NTPase"/>
</dbReference>
<dbReference type="InterPro" id="IPR005225">
    <property type="entry name" value="Small_GTP-bd"/>
</dbReference>
<dbReference type="NCBIfam" id="TIGR03594">
    <property type="entry name" value="GTPase_EngA"/>
    <property type="match status" value="1"/>
</dbReference>
<dbReference type="NCBIfam" id="TIGR00231">
    <property type="entry name" value="small_GTP"/>
    <property type="match status" value="2"/>
</dbReference>
<dbReference type="PANTHER" id="PTHR43834">
    <property type="entry name" value="GTPASE DER"/>
    <property type="match status" value="1"/>
</dbReference>
<dbReference type="PANTHER" id="PTHR43834:SF6">
    <property type="entry name" value="GTPASE DER"/>
    <property type="match status" value="1"/>
</dbReference>
<dbReference type="Pfam" id="PF14714">
    <property type="entry name" value="KH_dom-like"/>
    <property type="match status" value="1"/>
</dbReference>
<dbReference type="Pfam" id="PF01926">
    <property type="entry name" value="MMR_HSR1"/>
    <property type="match status" value="2"/>
</dbReference>
<dbReference type="PIRSF" id="PIRSF006485">
    <property type="entry name" value="GTP-binding_EngA"/>
    <property type="match status" value="1"/>
</dbReference>
<dbReference type="PRINTS" id="PR00326">
    <property type="entry name" value="GTP1OBG"/>
</dbReference>
<dbReference type="SUPFAM" id="SSF52540">
    <property type="entry name" value="P-loop containing nucleoside triphosphate hydrolases"/>
    <property type="match status" value="2"/>
</dbReference>
<dbReference type="PROSITE" id="PS51712">
    <property type="entry name" value="G_ENGA"/>
    <property type="match status" value="2"/>
</dbReference>
<comment type="function">
    <text evidence="1">GTPase that plays an essential role in the late steps of ribosome biogenesis.</text>
</comment>
<comment type="subunit">
    <text evidence="1">Associates with the 50S ribosomal subunit.</text>
</comment>
<comment type="similarity">
    <text evidence="1">Belongs to the TRAFAC class TrmE-Era-EngA-EngB-Septin-like GTPase superfamily. EngA (Der) GTPase family.</text>
</comment>
<gene>
    <name evidence="1" type="primary">der</name>
    <name type="synonym">engA</name>
    <name type="ordered locus">RHOS4_12850</name>
    <name type="ORF">RSP_2699</name>
</gene>
<organism>
    <name type="scientific">Cereibacter sphaeroides (strain ATCC 17023 / DSM 158 / JCM 6121 / CCUG 31486 / LMG 2827 / NBRC 12203 / NCIMB 8253 / ATH 2.4.1.)</name>
    <name type="common">Rhodobacter sphaeroides</name>
    <dbReference type="NCBI Taxonomy" id="272943"/>
    <lineage>
        <taxon>Bacteria</taxon>
        <taxon>Pseudomonadati</taxon>
        <taxon>Pseudomonadota</taxon>
        <taxon>Alphaproteobacteria</taxon>
        <taxon>Rhodobacterales</taxon>
        <taxon>Paracoccaceae</taxon>
        <taxon>Cereibacter</taxon>
    </lineage>
</organism>